<comment type="function">
    <text evidence="1">Transcriptional regulator (lacking a basic DNA binding domain) which negatively regulates the basic helix-loop-helix (bHLH) transcription factors by forming heterodimers and inhibiting their DNA binding and transcriptional activity. Influences cell fate decisions in the embryo by sequestering and blocking the activity of the bHLH transcription factors that control these decisions. Inhibits the binding of myogenic bHLH-containing complexes to E-box DNA, thereby preventing activation of muscle-specific target genes. Also inhibits the activity of neurogenic factor neurod1/neuroD. Plays a role in cell cycle progression and survival of neural crest progenitors; binding to either hes4-B/hairy2b or stat3 blocks the formation of transcription factor complexes and the repressor function of hes4-B/hairy2B, to allow neural crest progenitors to differentiate. May play a role in the regulation of the circadian rhythm (By similarity).</text>
</comment>
<comment type="subunit">
    <text evidence="3">Homodimer (By similarity). Heterodimer with other HLH proteins. Interacts (via HLH domain) with the bHLH protein hes4/hairy2 (via Orange domain). Interacts with stat3 (By similarity).</text>
</comment>
<comment type="subcellular location">
    <subcellularLocation>
        <location evidence="2 4">Nucleus</location>
    </subcellularLocation>
</comment>
<keyword id="KW-0090">Biological rhythms</keyword>
<keyword id="KW-0217">Developmental protein</keyword>
<keyword id="KW-0539">Nucleus</keyword>
<keyword id="KW-1185">Reference proteome</keyword>
<keyword id="KW-0678">Repressor</keyword>
<keyword id="KW-0804">Transcription</keyword>
<keyword id="KW-0805">Transcription regulation</keyword>
<protein>
    <recommendedName>
        <fullName evidence="2">DNA-binding protein inhibitor ID-3</fullName>
    </recommendedName>
    <alternativeName>
        <fullName evidence="3">Inhibitor of DNA binding 3</fullName>
    </alternativeName>
    <alternativeName>
        <fullName>Inhibitor of differentiation 3</fullName>
    </alternativeName>
</protein>
<dbReference type="EMBL" id="AC151468">
    <property type="protein sequence ID" value="AAU12853.1"/>
    <property type="molecule type" value="Genomic_DNA"/>
</dbReference>
<dbReference type="EMBL" id="CR761665">
    <property type="protein sequence ID" value="CAJ83590.1"/>
    <property type="molecule type" value="mRNA"/>
</dbReference>
<dbReference type="EMBL" id="BC170654">
    <property type="protein sequence ID" value="AAI70654.1"/>
    <property type="molecule type" value="mRNA"/>
</dbReference>
<dbReference type="EMBL" id="BC170656">
    <property type="protein sequence ID" value="AAI70656.1"/>
    <property type="molecule type" value="mRNA"/>
</dbReference>
<dbReference type="RefSeq" id="NP_001016271.1">
    <property type="nucleotide sequence ID" value="NM_001016271.2"/>
</dbReference>
<dbReference type="SMR" id="Q688C4"/>
<dbReference type="FunCoup" id="Q688C4">
    <property type="interactions" value="1217"/>
</dbReference>
<dbReference type="STRING" id="8364.ENSXETP00000003606"/>
<dbReference type="PaxDb" id="8364-ENSXETP00000044625"/>
<dbReference type="GeneID" id="549025"/>
<dbReference type="KEGG" id="xtr:549025"/>
<dbReference type="AGR" id="Xenbase:XB-GENE-495261"/>
<dbReference type="CTD" id="3399"/>
<dbReference type="Xenbase" id="XB-GENE-495261">
    <property type="gene designation" value="id3"/>
</dbReference>
<dbReference type="eggNOG" id="ENOG502S53I">
    <property type="taxonomic scope" value="Eukaryota"/>
</dbReference>
<dbReference type="HOGENOM" id="CLU_116790_1_0_1"/>
<dbReference type="InParanoid" id="Q688C4"/>
<dbReference type="OMA" id="CSKDERT"/>
<dbReference type="OrthoDB" id="10047910at2759"/>
<dbReference type="PhylomeDB" id="Q688C4"/>
<dbReference type="TreeFam" id="TF326217"/>
<dbReference type="Proteomes" id="UP000008143">
    <property type="component" value="Chromosome 2"/>
</dbReference>
<dbReference type="Bgee" id="ENSXETG00000020653">
    <property type="expression patterns" value="Expressed in gastrula and 32 other cell types or tissues"/>
</dbReference>
<dbReference type="GO" id="GO:0005737">
    <property type="term" value="C:cytoplasm"/>
    <property type="evidence" value="ECO:0007669"/>
    <property type="project" value="InterPro"/>
</dbReference>
<dbReference type="GO" id="GO:0005634">
    <property type="term" value="C:nucleus"/>
    <property type="evidence" value="ECO:0007669"/>
    <property type="project" value="UniProtKB-SubCell"/>
</dbReference>
<dbReference type="GO" id="GO:0043425">
    <property type="term" value="F:bHLH transcription factor binding"/>
    <property type="evidence" value="ECO:0000250"/>
    <property type="project" value="UniProtKB"/>
</dbReference>
<dbReference type="GO" id="GO:0046983">
    <property type="term" value="F:protein dimerization activity"/>
    <property type="evidence" value="ECO:0007669"/>
    <property type="project" value="InterPro"/>
</dbReference>
<dbReference type="GO" id="GO:0003401">
    <property type="term" value="P:axis elongation"/>
    <property type="evidence" value="ECO:0000315"/>
    <property type="project" value="Xenbase"/>
</dbReference>
<dbReference type="GO" id="GO:0060322">
    <property type="term" value="P:head development"/>
    <property type="evidence" value="ECO:0000315"/>
    <property type="project" value="Xenbase"/>
</dbReference>
<dbReference type="GO" id="GO:0043392">
    <property type="term" value="P:negative regulation of DNA binding"/>
    <property type="evidence" value="ECO:0000250"/>
    <property type="project" value="UniProtKB"/>
</dbReference>
<dbReference type="GO" id="GO:0045892">
    <property type="term" value="P:negative regulation of DNA-templated transcription"/>
    <property type="evidence" value="ECO:0000250"/>
    <property type="project" value="UniProtKB"/>
</dbReference>
<dbReference type="GO" id="GO:0000122">
    <property type="term" value="P:negative regulation of transcription by RNA polymerase II"/>
    <property type="evidence" value="ECO:0000250"/>
    <property type="project" value="UniProtKB"/>
</dbReference>
<dbReference type="GO" id="GO:0014029">
    <property type="term" value="P:neural crest formation"/>
    <property type="evidence" value="ECO:0000250"/>
    <property type="project" value="UniProtKB"/>
</dbReference>
<dbReference type="GO" id="GO:0051726">
    <property type="term" value="P:regulation of cell cycle"/>
    <property type="evidence" value="ECO:0000250"/>
    <property type="project" value="UniProtKB"/>
</dbReference>
<dbReference type="GO" id="GO:0048511">
    <property type="term" value="P:rhythmic process"/>
    <property type="evidence" value="ECO:0007669"/>
    <property type="project" value="UniProtKB-KW"/>
</dbReference>
<dbReference type="CDD" id="cd19693">
    <property type="entry name" value="bHLH_dnHLH_ID3"/>
    <property type="match status" value="1"/>
</dbReference>
<dbReference type="FunFam" id="4.10.280.10:FF:000039">
    <property type="entry name" value="DNA-binding protein inhibitor ID-3"/>
    <property type="match status" value="1"/>
</dbReference>
<dbReference type="Gene3D" id="4.10.280.10">
    <property type="entry name" value="Helix-loop-helix DNA-binding domain"/>
    <property type="match status" value="1"/>
</dbReference>
<dbReference type="InterPro" id="IPR011598">
    <property type="entry name" value="bHLH_dom"/>
</dbReference>
<dbReference type="InterPro" id="IPR026052">
    <property type="entry name" value="DNA-bd_prot-inh"/>
</dbReference>
<dbReference type="InterPro" id="IPR036638">
    <property type="entry name" value="HLH_DNA-bd_sf"/>
</dbReference>
<dbReference type="PANTHER" id="PTHR11723">
    <property type="entry name" value="DNA-BINDING PROTEIN INHIBITOR"/>
    <property type="match status" value="1"/>
</dbReference>
<dbReference type="PANTHER" id="PTHR11723:SF16">
    <property type="entry name" value="DNA-BINDING PROTEIN INHIBITOR ID-3"/>
    <property type="match status" value="1"/>
</dbReference>
<dbReference type="Pfam" id="PF00010">
    <property type="entry name" value="HLH"/>
    <property type="match status" value="1"/>
</dbReference>
<dbReference type="SMART" id="SM00353">
    <property type="entry name" value="HLH"/>
    <property type="match status" value="1"/>
</dbReference>
<dbReference type="SUPFAM" id="SSF47459">
    <property type="entry name" value="HLH, helix-loop-helix DNA-binding domain"/>
    <property type="match status" value="1"/>
</dbReference>
<dbReference type="PROSITE" id="PS50888">
    <property type="entry name" value="BHLH"/>
    <property type="match status" value="1"/>
</dbReference>
<gene>
    <name type="primary">id3</name>
    <name type="ORF">TGas044c15.1</name>
</gene>
<name>ID3_XENTR</name>
<evidence type="ECO:0000250" key="1"/>
<evidence type="ECO:0000250" key="2">
    <source>
        <dbReference type="UniProtKB" id="Q02535"/>
    </source>
</evidence>
<evidence type="ECO:0000250" key="3">
    <source>
        <dbReference type="UniProtKB" id="Q91399"/>
    </source>
</evidence>
<evidence type="ECO:0000255" key="4">
    <source>
        <dbReference type="PROSITE-ProRule" id="PRU00981"/>
    </source>
</evidence>
<evidence type="ECO:0000312" key="5">
    <source>
        <dbReference type="EMBL" id="AAU12853.1"/>
    </source>
</evidence>
<evidence type="ECO:0000312" key="6">
    <source>
        <dbReference type="EMBL" id="CAJ83590.1"/>
    </source>
</evidence>
<sequence>MKAISPVRSMSSCYQAVCCLSEQSLSIARGSSHKGPGVDEPMGLLYDMNGCYSKLKELVPGIPQGSKLSQVEILQHVIDYIFDLQIVLGEDQQQNSILNLQKSDFSELATQGDASVCH</sequence>
<feature type="chain" id="PRO_0000390726" description="DNA-binding protein inhibitor ID-3">
    <location>
        <begin position="1"/>
        <end position="118"/>
    </location>
</feature>
<feature type="domain" description="bHLH" evidence="4">
    <location>
        <begin position="32"/>
        <end position="84"/>
    </location>
</feature>
<proteinExistence type="inferred from homology"/>
<accession>Q688C4</accession>
<organism>
    <name type="scientific">Xenopus tropicalis</name>
    <name type="common">Western clawed frog</name>
    <name type="synonym">Silurana tropicalis</name>
    <dbReference type="NCBI Taxonomy" id="8364"/>
    <lineage>
        <taxon>Eukaryota</taxon>
        <taxon>Metazoa</taxon>
        <taxon>Chordata</taxon>
        <taxon>Craniata</taxon>
        <taxon>Vertebrata</taxon>
        <taxon>Euteleostomi</taxon>
        <taxon>Amphibia</taxon>
        <taxon>Batrachia</taxon>
        <taxon>Anura</taxon>
        <taxon>Pipoidea</taxon>
        <taxon>Pipidae</taxon>
        <taxon>Xenopodinae</taxon>
        <taxon>Xenopus</taxon>
        <taxon>Silurana</taxon>
    </lineage>
</organism>
<reference evidence="5" key="1">
    <citation type="submission" date="2004-09" db="EMBL/GenBank/DDBJ databases">
        <title>Sequence of Xenopus tropicalis development genes.</title>
        <authorList>
            <person name="Qin S."/>
            <person name="Dors M."/>
            <person name="Johnson E."/>
            <person name="Bloom S."/>
            <person name="Hood L."/>
            <person name="Rowen L."/>
        </authorList>
    </citation>
    <scope>NUCLEOTIDE SEQUENCE [GENOMIC DNA]</scope>
</reference>
<reference evidence="5" key="2">
    <citation type="submission" date="2006-10" db="EMBL/GenBank/DDBJ databases">
        <authorList>
            <consortium name="Sanger Xenopus tropicalis EST/cDNA project"/>
        </authorList>
    </citation>
    <scope>NUCLEOTIDE SEQUENCE [LARGE SCALE MRNA]</scope>
    <source>
        <tissue evidence="6">Gastrula</tissue>
    </source>
</reference>
<reference evidence="5" key="3">
    <citation type="submission" date="2008-11" db="EMBL/GenBank/DDBJ databases">
        <authorList>
            <consortium name="NIH - Xenopus Gene Collection (XGC) project"/>
        </authorList>
    </citation>
    <scope>NUCLEOTIDE SEQUENCE [LARGE SCALE MRNA]</scope>
</reference>